<proteinExistence type="inferred from homology"/>
<accession>A1UTQ7</accession>
<gene>
    <name type="ordered locus">BARBAKC583_1098</name>
</gene>
<evidence type="ECO:0000255" key="1">
    <source>
        <dbReference type="HAMAP-Rule" id="MF_01187"/>
    </source>
</evidence>
<evidence type="ECO:0000305" key="2"/>
<name>Y1098_BARBK</name>
<comment type="similarity">
    <text evidence="1">Belongs to the UPF0434 family.</text>
</comment>
<comment type="sequence caution" evidence="2">
    <conflict type="erroneous initiation">
        <sequence resource="EMBL-CDS" id="ABM45674"/>
    </conflict>
</comment>
<feature type="chain" id="PRO_0000291056" description="UPF0434 protein BARBAKC583_1098">
    <location>
        <begin position="1"/>
        <end position="55"/>
    </location>
</feature>
<organism>
    <name type="scientific">Bartonella bacilliformis (strain ATCC 35685 / KC583 / Herrer 020/F12,63)</name>
    <dbReference type="NCBI Taxonomy" id="360095"/>
    <lineage>
        <taxon>Bacteria</taxon>
        <taxon>Pseudomonadati</taxon>
        <taxon>Pseudomonadota</taxon>
        <taxon>Alphaproteobacteria</taxon>
        <taxon>Hyphomicrobiales</taxon>
        <taxon>Bartonellaceae</taxon>
        <taxon>Bartonella</taxon>
    </lineage>
</organism>
<dbReference type="EMBL" id="CP000524">
    <property type="protein sequence ID" value="ABM45674.1"/>
    <property type="status" value="ALT_INIT"/>
    <property type="molecule type" value="Genomic_DNA"/>
</dbReference>
<dbReference type="SMR" id="A1UTQ7"/>
<dbReference type="KEGG" id="bbk:BARBAKC583_1098"/>
<dbReference type="eggNOG" id="COG2835">
    <property type="taxonomic scope" value="Bacteria"/>
</dbReference>
<dbReference type="HOGENOM" id="CLU_155659_2_2_5"/>
<dbReference type="Proteomes" id="UP000000643">
    <property type="component" value="Chromosome"/>
</dbReference>
<dbReference type="GO" id="GO:0005829">
    <property type="term" value="C:cytosol"/>
    <property type="evidence" value="ECO:0007669"/>
    <property type="project" value="TreeGrafter"/>
</dbReference>
<dbReference type="FunFam" id="2.20.25.10:FF:000002">
    <property type="entry name" value="UPF0434 protein YcaR"/>
    <property type="match status" value="1"/>
</dbReference>
<dbReference type="Gene3D" id="2.20.25.10">
    <property type="match status" value="1"/>
</dbReference>
<dbReference type="HAMAP" id="MF_01187">
    <property type="entry name" value="UPF0434"/>
    <property type="match status" value="1"/>
</dbReference>
<dbReference type="InterPro" id="IPR005651">
    <property type="entry name" value="Trm112-like"/>
</dbReference>
<dbReference type="PANTHER" id="PTHR33505:SF4">
    <property type="entry name" value="PROTEIN PREY, MITOCHONDRIAL"/>
    <property type="match status" value="1"/>
</dbReference>
<dbReference type="PANTHER" id="PTHR33505">
    <property type="entry name" value="ZGC:162634"/>
    <property type="match status" value="1"/>
</dbReference>
<dbReference type="Pfam" id="PF03966">
    <property type="entry name" value="Trm112p"/>
    <property type="match status" value="1"/>
</dbReference>
<dbReference type="SUPFAM" id="SSF158997">
    <property type="entry name" value="Trm112p-like"/>
    <property type="match status" value="1"/>
</dbReference>
<sequence>MTTDPKMLELLVCPITGGNLSFNRKTQELISLKAKLAYPIRDGVPIMLASEARPL</sequence>
<protein>
    <recommendedName>
        <fullName evidence="1">UPF0434 protein BARBAKC583_1098</fullName>
    </recommendedName>
</protein>
<reference key="1">
    <citation type="submission" date="2006-12" db="EMBL/GenBank/DDBJ databases">
        <authorList>
            <person name="Hendrix L."/>
            <person name="Mohamoud Y."/>
            <person name="Radune D."/>
            <person name="Shvartsbeyn A."/>
            <person name="Daugherty S."/>
            <person name="Dodson R."/>
            <person name="Durkin A.S."/>
            <person name="Harkins D."/>
            <person name="Huot H."/>
            <person name="Kothari S.P."/>
            <person name="Madupu R."/>
            <person name="Li J."/>
            <person name="Nelson W.C."/>
            <person name="Shrivastava S."/>
            <person name="Giglio M.G."/>
            <person name="Haft D."/>
            <person name="Selengut J."/>
            <person name="Fraser-Ligget C."/>
            <person name="Seshadri R."/>
        </authorList>
    </citation>
    <scope>NUCLEOTIDE SEQUENCE [LARGE SCALE GENOMIC DNA]</scope>
    <source>
        <strain>ATCC 35685 / KC583 / Herrer 020/F12,63</strain>
    </source>
</reference>